<reference key="1">
    <citation type="journal article" date="2008" name="J. Virol.">
        <title>Full genome-based classification of rotaviruses reveals a common origin between human Wa-Like and porcine rotavirus strains and human DS-1-like and bovine rotavirus strains.</title>
        <authorList>
            <person name="Matthijnssens J."/>
            <person name="Ciarlet M."/>
            <person name="Heiman E.M."/>
            <person name="Arijs I."/>
            <person name="Delbeke T."/>
            <person name="McDonald S.M."/>
            <person name="Palombo E.A."/>
            <person name="Iturriza-Gomara M."/>
            <person name="Maes P."/>
            <person name="Patton J.T."/>
            <person name="Rahman M."/>
            <person name="Van Ranst M."/>
        </authorList>
    </citation>
    <scope>NUCLEOTIDE SEQUENCE [GENOMIC RNA]</scope>
</reference>
<reference key="2">
    <citation type="journal article" date="2006" name="Virus Genes">
        <title>Genetic characterization of VP3 gene of group A rotaviruses.</title>
        <authorList>
            <person name="Subodh S."/>
            <person name="Bhan M.K."/>
            <person name="Ray P."/>
        </authorList>
    </citation>
    <scope>NUCLEOTIDE SEQUENCE [GENOMIC RNA] OF 138-294</scope>
</reference>
<name>VP3_ROTHP</name>
<evidence type="ECO:0000255" key="1">
    <source>
        <dbReference type="HAMAP-Rule" id="MF_04128"/>
    </source>
</evidence>
<evidence type="ECO:0000305" key="2"/>
<sequence>MKVLALRHSVAQVYADTQTYLHDDSKDEYENAFLISNLTTHNILYLNYSLKTLKILNKSGIAAVEVQSPDELFALIRCNFTYDYENNIIYLHDYSYYTNNEIRTDQHWITKTDIIDYLLPGWKLTYVGYNGKNTRGHYNFSFSCQNAATDDDIIIEYIYSNELDFQNFLLRKIKERMTTSLPIARLSNRVFRDKLFPSIVNIYKKVINVGPRNESMFTFLNFPTIKQFSNGAYIVKHTIKLKQEKWLGKRVSQFDIGQYKNMLNVVTTIYYYYNLYHSKPIIYMLGSAPSYWIHDIKQYSDFTFETWDPLDTPYSTIHHKELFFDKDVNKLKDNSVLYIDIRTDRKNMDWKEWRKVVEQQTVNNLNIAYKYLSTGKAKVCCVKLTAMDLELPITAKLLHHPTTEVRSEFYAILDAWDIITIKRFIPKGVFYAFINNITTENVFIQPPFKLKASPTDYIVALYALSNDFNSRQDVINLINKQKQSLITVRMNNTFKDEPKVNFKNIYDWTFLPTDFELKDSIITSYDGCLGMFGLSISLSSKPTGNNHLFIINGTDKYYKLDQYANHMGISRRSHQIRFSESATSYSGYIFRDLSNNNFNLIGTNVENSVSGHVYNALIYYRYNYAFDLKRWIYLHSIGKVTVEGGRYYEHAPIELIYACRSAKEFAILQDDLTVLRYANEIEGYINKVYSITYADDPNYFIGIKFNSIPYEYDVKVPHLTLGVLFISDNMIHDVVTVLKKMKTELFKTEISTSYTYMLSDNIYVANASGVLSTYFKLYNMFYRNHITFGQSRMFIPHITLSFSNKQTVRIESTRLKINSIYLRKIKGETVFDMSE</sequence>
<organismHost>
    <name type="scientific">Homo sapiens</name>
    <name type="common">Human</name>
    <dbReference type="NCBI Taxonomy" id="9606"/>
</organismHost>
<dbReference type="EC" id="3.1.4.-" evidence="1"/>
<dbReference type="EC" id="2.7.7.50" evidence="1"/>
<dbReference type="EC" id="2.1.1.56" evidence="1"/>
<dbReference type="EMBL" id="EF583039">
    <property type="protein sequence ID" value="ABU87848.1"/>
    <property type="molecule type" value="Genomic_RNA"/>
</dbReference>
<dbReference type="EMBL" id="DQ200932">
    <property type="protein sequence ID" value="ABB18255.1"/>
    <property type="status" value="ALT_FRAME"/>
    <property type="molecule type" value="Genomic_RNA"/>
</dbReference>
<dbReference type="SMR" id="B1NKT1"/>
<dbReference type="Reactome" id="R-HSA-8983711">
    <property type="pathway name" value="OAS antiviral response"/>
</dbReference>
<dbReference type="Proteomes" id="UP000007047">
    <property type="component" value="Genome"/>
</dbReference>
<dbReference type="GO" id="GO:0019013">
    <property type="term" value="C:viral nucleocapsid"/>
    <property type="evidence" value="ECO:0007669"/>
    <property type="project" value="UniProtKB-UniRule"/>
</dbReference>
<dbReference type="GO" id="GO:0005525">
    <property type="term" value="F:GTP binding"/>
    <property type="evidence" value="ECO:0007669"/>
    <property type="project" value="UniProtKB-UniRule"/>
</dbReference>
<dbReference type="GO" id="GO:0004482">
    <property type="term" value="F:mRNA 5'-cap (guanine-N7-)-methyltransferase activity"/>
    <property type="evidence" value="ECO:0007669"/>
    <property type="project" value="UniProtKB-UniRule"/>
</dbReference>
<dbReference type="GO" id="GO:0004484">
    <property type="term" value="F:mRNA guanylyltransferase activity"/>
    <property type="evidence" value="ECO:0007669"/>
    <property type="project" value="UniProtKB-UniRule"/>
</dbReference>
<dbReference type="GO" id="GO:0034611">
    <property type="term" value="F:oligoribonucleotidase activity"/>
    <property type="evidence" value="ECO:0000269"/>
    <property type="project" value="Reactome"/>
</dbReference>
<dbReference type="GO" id="GO:0003723">
    <property type="term" value="F:RNA binding"/>
    <property type="evidence" value="ECO:0007669"/>
    <property type="project" value="UniProtKB-UniRule"/>
</dbReference>
<dbReference type="GO" id="GO:0051607">
    <property type="term" value="P:defense response to virus"/>
    <property type="evidence" value="ECO:0000304"/>
    <property type="project" value="Reactome"/>
</dbReference>
<dbReference type="GO" id="GO:0052170">
    <property type="term" value="P:symbiont-mediated suppression of host innate immune response"/>
    <property type="evidence" value="ECO:0007669"/>
    <property type="project" value="UniProtKB-KW"/>
</dbReference>
<dbReference type="GO" id="GO:0016032">
    <property type="term" value="P:viral process"/>
    <property type="evidence" value="ECO:0007669"/>
    <property type="project" value="UniProtKB-UniRule"/>
</dbReference>
<dbReference type="CDD" id="cd20757">
    <property type="entry name" value="capping_2-OMTase_Rotavirus"/>
    <property type="match status" value="1"/>
</dbReference>
<dbReference type="HAMAP" id="MF_04124">
    <property type="entry name" value="Rota_VP3"/>
    <property type="match status" value="1"/>
</dbReference>
<dbReference type="HAMAP" id="MF_04128">
    <property type="entry name" value="Rota_VP3_A"/>
    <property type="match status" value="1"/>
</dbReference>
<dbReference type="InterPro" id="IPR011181">
    <property type="entry name" value="VP3_Rotav"/>
</dbReference>
<dbReference type="Pfam" id="PF06929">
    <property type="entry name" value="Rotavirus_VP3"/>
    <property type="match status" value="1"/>
</dbReference>
<dbReference type="PIRSF" id="PIRSF004015">
    <property type="entry name" value="LigT_rotavirus"/>
    <property type="match status" value="1"/>
</dbReference>
<dbReference type="PROSITE" id="PS51589">
    <property type="entry name" value="SAM_MT56_VP3"/>
    <property type="match status" value="1"/>
</dbReference>
<accession>B1NKT1</accession>
<accession>Q1ADF3</accession>
<feature type="chain" id="PRO_0000368086" description="Protein VP3">
    <location>
        <begin position="1"/>
        <end position="835"/>
    </location>
</feature>
<feature type="region of interest" description="N7-methyltransferase activity" evidence="1">
    <location>
        <begin position="171"/>
        <end position="245"/>
    </location>
</feature>
<feature type="region of interest" description="2'-O-methyltransferase activity" evidence="1">
    <location>
        <begin position="246"/>
        <end position="428"/>
    </location>
</feature>
<feature type="region of interest" description="N7-methyltransferase activity" evidence="1">
    <location>
        <begin position="429"/>
        <end position="555"/>
    </location>
</feature>
<feature type="region of interest" description="GTase/RTPase activity" evidence="1">
    <location>
        <begin position="556"/>
        <end position="692"/>
    </location>
</feature>
<feature type="region of interest" description="2'-5'-phosphodiesterase activity" evidence="1">
    <location>
        <begin position="693"/>
        <end position="835"/>
    </location>
</feature>
<feature type="active site" description="For 2'-5'-phosphodiesterase activity" evidence="1">
    <location>
        <position position="718"/>
    </location>
</feature>
<feature type="active site" description="For 2'-5'-phosphodiesterase activity" evidence="1">
    <location>
        <position position="720"/>
    </location>
</feature>
<feature type="active site" description="For 2'-5'-phosphodiesterase activity" evidence="1">
    <location>
        <position position="797"/>
    </location>
</feature>
<feature type="active site" description="For 2'-5'-phosphodiesterase activity" evidence="1">
    <location>
        <position position="799"/>
    </location>
</feature>
<feature type="sequence conflict" description="In Ref. 2; ABB18255." evidence="2" ref="2">
    <original>H</original>
    <variation>Y</variation>
    <location>
        <position position="294"/>
    </location>
</feature>
<proteinExistence type="inferred from homology"/>
<organism>
    <name type="scientific">Rotavirus A (strain RVA/Human/United States/P/1974/G3P1A[8])</name>
    <name type="common">RV-A</name>
    <dbReference type="NCBI Taxonomy" id="10957"/>
    <lineage>
        <taxon>Viruses</taxon>
        <taxon>Riboviria</taxon>
        <taxon>Orthornavirae</taxon>
        <taxon>Duplornaviricota</taxon>
        <taxon>Resentoviricetes</taxon>
        <taxon>Reovirales</taxon>
        <taxon>Sedoreoviridae</taxon>
        <taxon>Rotavirus</taxon>
        <taxon>Rotavirus A</taxon>
    </lineage>
</organism>
<keyword id="KW-0342">GTP-binding</keyword>
<keyword id="KW-0945">Host-virus interaction</keyword>
<keyword id="KW-0378">Hydrolase</keyword>
<keyword id="KW-1090">Inhibition of host innate immune response by virus</keyword>
<keyword id="KW-0489">Methyltransferase</keyword>
<keyword id="KW-0506">mRNA capping</keyword>
<keyword id="KW-0507">mRNA processing</keyword>
<keyword id="KW-0511">Multifunctional enzyme</keyword>
<keyword id="KW-0547">Nucleotide-binding</keyword>
<keyword id="KW-0548">Nucleotidyltransferase</keyword>
<keyword id="KW-0694">RNA-binding</keyword>
<keyword id="KW-0949">S-adenosyl-L-methionine</keyword>
<keyword id="KW-0808">Transferase</keyword>
<keyword id="KW-0899">Viral immunoevasion</keyword>
<keyword id="KW-0946">Virion</keyword>
<protein>
    <recommendedName>
        <fullName evidence="1">Protein VP3</fullName>
    </recommendedName>
    <domain>
        <recommendedName>
            <fullName evidence="1">2',5'-phosphodiesterase</fullName>
            <ecNumber evidence="1">3.1.4.-</ecNumber>
        </recommendedName>
    </domain>
    <domain>
        <recommendedName>
            <fullName evidence="1">mRNA guanylyltransferase</fullName>
            <ecNumber evidence="1">2.7.7.50</ecNumber>
        </recommendedName>
    </domain>
    <domain>
        <recommendedName>
            <fullName evidence="1">mRNA (guanine-N(7))-methyltransferase</fullName>
            <ecNumber evidence="1">2.1.1.56</ecNumber>
        </recommendedName>
    </domain>
</protein>
<comment type="function">
    <text evidence="1">Multifunctional enzyme involved in mRNA capping. Catalyzes the formation of the 5' cap structure on the viral plus-strand transcripts. Specifically binds to GTP and displays guanylyltransferase and methyltransferase activities. Has affinity for ssRNA but not for dsRNA. Capping activity is non-specific and caps RNAs that initiate with either a G or an A residue. Together with VP1 polymerase, forms a VP1-VP3 complex positioned near the channels situated at each of the five-fold vertices of the core. Following infection, the outermost layer of the virus is lost, leaving a double-layered particle (DLP) made up of the core and VP6 shell. VP1 then catalyzes the transcription of fully conservative plus-strand genomic RNAs that are capped by VP3 and extruded through the DLP's channels into the cytoplasm where they function as mRNAs for translation of viral proteins. DLPs probably have an RNA triphosphatase activity as well, whereas open cores do not.</text>
</comment>
<comment type="function">
    <text evidence="1">Counteracts the host innate immune response thanks to its phosphodiesterase that degrades the 5'-triphosphorylated, 2'-5' linked adenylate oligomers produced by the host cell IFN-inducible 2',5'-oligoadenylate synthetase (OAS). The host RNaseL is therefore not activated.</text>
</comment>
<comment type="catalytic activity">
    <reaction evidence="1">
        <text>a 5'-end diphospho-ribonucleoside in mRNA + GTP + H(+) = a 5'-end (5'-triphosphoguanosine)-ribonucleoside in mRNA + diphosphate</text>
        <dbReference type="Rhea" id="RHEA:67012"/>
        <dbReference type="Rhea" id="RHEA-COMP:17165"/>
        <dbReference type="Rhea" id="RHEA-COMP:17166"/>
        <dbReference type="ChEBI" id="CHEBI:15378"/>
        <dbReference type="ChEBI" id="CHEBI:33019"/>
        <dbReference type="ChEBI" id="CHEBI:37565"/>
        <dbReference type="ChEBI" id="CHEBI:167616"/>
        <dbReference type="ChEBI" id="CHEBI:167617"/>
        <dbReference type="EC" id="2.7.7.50"/>
    </reaction>
</comment>
<comment type="catalytic activity">
    <reaction evidence="1">
        <text>a 5'-end (5'-triphosphoguanosine)-ribonucleoside in mRNA + S-adenosyl-L-methionine = a 5'-end (N(7)-methyl 5'-triphosphoguanosine)-ribonucleoside in mRNA + S-adenosyl-L-homocysteine</text>
        <dbReference type="Rhea" id="RHEA:67008"/>
        <dbReference type="Rhea" id="RHEA-COMP:17166"/>
        <dbReference type="Rhea" id="RHEA-COMP:17167"/>
        <dbReference type="ChEBI" id="CHEBI:57856"/>
        <dbReference type="ChEBI" id="CHEBI:59789"/>
        <dbReference type="ChEBI" id="CHEBI:156461"/>
        <dbReference type="ChEBI" id="CHEBI:167617"/>
        <dbReference type="EC" id="2.1.1.56"/>
    </reaction>
</comment>
<comment type="catalytic activity">
    <reaction evidence="1">
        <text>5'-triphosphoadenylyl-(2'-&gt;5')-adenylyl-(2'-&gt;5')-adenosine + 2 H2O = 2 AMP + ATP + 2 H(+)</text>
        <dbReference type="Rhea" id="RHEA:45964"/>
        <dbReference type="ChEBI" id="CHEBI:15377"/>
        <dbReference type="ChEBI" id="CHEBI:15378"/>
        <dbReference type="ChEBI" id="CHEBI:30616"/>
        <dbReference type="ChEBI" id="CHEBI:67143"/>
        <dbReference type="ChEBI" id="CHEBI:456215"/>
    </reaction>
</comment>
<comment type="subunit">
    <text evidence="1">Interacts with VP1. Interacts with VP2.</text>
</comment>
<comment type="subcellular location">
    <subcellularLocation>
        <location evidence="1">Virion</location>
    </subcellularLocation>
    <text evidence="1">Attached inside the inner capsid as a minor component. There are about 11 to 12 copies per virion.</text>
</comment>
<comment type="domain">
    <text evidence="1">Contains a bipartite N7-methyltransferase domain, a 2'-O-methyltransferase domain and a GTase/RTPase domain. The C-terminus contains a phosphodiesterase domain that degrades the 5'-triphosphorylated, 2'-5' linked adenylate oligomers produced by the host cell in response to IFN stimulation.</text>
</comment>
<comment type="similarity">
    <text evidence="1">Belongs to the rotavirus VP3 family.</text>
</comment>
<comment type="sequence caution" evidence="2">
    <conflict type="frameshift">
        <sequence resource="EMBL-CDS" id="ABB18255"/>
    </conflict>
</comment>